<organism>
    <name type="scientific">Methanothrix thermoacetophila (strain DSM 6194 / JCM 14653 / NBRC 101360 / PT)</name>
    <name type="common">Methanosaeta thermophila</name>
    <dbReference type="NCBI Taxonomy" id="349307"/>
    <lineage>
        <taxon>Archaea</taxon>
        <taxon>Methanobacteriati</taxon>
        <taxon>Methanobacteriota</taxon>
        <taxon>Stenosarchaea group</taxon>
        <taxon>Methanomicrobia</taxon>
        <taxon>Methanotrichales</taxon>
        <taxon>Methanotrichaceae</taxon>
        <taxon>Methanothrix</taxon>
    </lineage>
</organism>
<gene>
    <name evidence="2" type="primary">fen</name>
    <name type="ordered locus">Mthe_1634</name>
</gene>
<proteinExistence type="inferred from homology"/>
<name>FEN_METTP</name>
<keyword id="KW-0227">DNA damage</keyword>
<keyword id="KW-0234">DNA repair</keyword>
<keyword id="KW-0235">DNA replication</keyword>
<keyword id="KW-0255">Endonuclease</keyword>
<keyword id="KW-0269">Exonuclease</keyword>
<keyword id="KW-0378">Hydrolase</keyword>
<keyword id="KW-0460">Magnesium</keyword>
<keyword id="KW-0479">Metal-binding</keyword>
<keyword id="KW-0540">Nuclease</keyword>
<keyword id="KW-1185">Reference proteome</keyword>
<accession>A0B9M7</accession>
<reference key="1">
    <citation type="submission" date="2006-10" db="EMBL/GenBank/DDBJ databases">
        <title>Complete sequence of Methanosaeta thermophila PT.</title>
        <authorList>
            <consortium name="US DOE Joint Genome Institute"/>
            <person name="Copeland A."/>
            <person name="Lucas S."/>
            <person name="Lapidus A."/>
            <person name="Barry K."/>
            <person name="Detter J.C."/>
            <person name="Glavina del Rio T."/>
            <person name="Hammon N."/>
            <person name="Israni S."/>
            <person name="Pitluck S."/>
            <person name="Chain P."/>
            <person name="Malfatti S."/>
            <person name="Shin M."/>
            <person name="Vergez L."/>
            <person name="Schmutz J."/>
            <person name="Larimer F."/>
            <person name="Land M."/>
            <person name="Hauser L."/>
            <person name="Kyrpides N."/>
            <person name="Kim E."/>
            <person name="Smith K.S."/>
            <person name="Ingram-Smith C."/>
            <person name="Richardson P."/>
        </authorList>
    </citation>
    <scope>NUCLEOTIDE SEQUENCE [LARGE SCALE GENOMIC DNA]</scope>
    <source>
        <strain>DSM 6194 / JCM 14653 / NBRC 101360 / PT</strain>
    </source>
</reference>
<evidence type="ECO:0000250" key="1"/>
<evidence type="ECO:0000255" key="2">
    <source>
        <dbReference type="HAMAP-Rule" id="MF_00614"/>
    </source>
</evidence>
<feature type="chain" id="PRO_1000061329" description="Flap endonuclease 1">
    <location>
        <begin position="1"/>
        <end position="336"/>
    </location>
</feature>
<feature type="region of interest" description="N-domain">
    <location>
        <begin position="1"/>
        <end position="98"/>
    </location>
</feature>
<feature type="region of interest" description="I-domain">
    <location>
        <begin position="114"/>
        <end position="255"/>
    </location>
</feature>
<feature type="region of interest" description="Interaction with PCNA" evidence="2">
    <location>
        <begin position="328"/>
        <end position="336"/>
    </location>
</feature>
<feature type="binding site" evidence="2">
    <location>
        <position position="27"/>
    </location>
    <ligand>
        <name>Mg(2+)</name>
        <dbReference type="ChEBI" id="CHEBI:18420"/>
        <label>1</label>
    </ligand>
</feature>
<feature type="binding site" evidence="2">
    <location>
        <position position="80"/>
    </location>
    <ligand>
        <name>Mg(2+)</name>
        <dbReference type="ChEBI" id="CHEBI:18420"/>
        <label>1</label>
    </ligand>
</feature>
<feature type="binding site" evidence="2">
    <location>
        <position position="150"/>
    </location>
    <ligand>
        <name>Mg(2+)</name>
        <dbReference type="ChEBI" id="CHEBI:18420"/>
        <label>1</label>
    </ligand>
</feature>
<feature type="binding site" evidence="2">
    <location>
        <position position="152"/>
    </location>
    <ligand>
        <name>Mg(2+)</name>
        <dbReference type="ChEBI" id="CHEBI:18420"/>
        <label>1</label>
    </ligand>
</feature>
<feature type="binding site" evidence="2">
    <location>
        <position position="171"/>
    </location>
    <ligand>
        <name>Mg(2+)</name>
        <dbReference type="ChEBI" id="CHEBI:18420"/>
        <label>2</label>
    </ligand>
</feature>
<feature type="binding site" evidence="2">
    <location>
        <position position="173"/>
    </location>
    <ligand>
        <name>Mg(2+)</name>
        <dbReference type="ChEBI" id="CHEBI:18420"/>
        <label>2</label>
    </ligand>
</feature>
<feature type="binding site" evidence="2">
    <location>
        <position position="234"/>
    </location>
    <ligand>
        <name>Mg(2+)</name>
        <dbReference type="ChEBI" id="CHEBI:18420"/>
        <label>2</label>
    </ligand>
</feature>
<dbReference type="EC" id="3.1.-.-" evidence="2"/>
<dbReference type="EMBL" id="CP000477">
    <property type="protein sequence ID" value="ABK15401.1"/>
    <property type="molecule type" value="Genomic_DNA"/>
</dbReference>
<dbReference type="RefSeq" id="WP_011696779.1">
    <property type="nucleotide sequence ID" value="NC_008553.1"/>
</dbReference>
<dbReference type="SMR" id="A0B9M7"/>
<dbReference type="STRING" id="349307.Mthe_1634"/>
<dbReference type="GeneID" id="4462506"/>
<dbReference type="KEGG" id="mtp:Mthe_1634"/>
<dbReference type="HOGENOM" id="CLU_032444_0_0_2"/>
<dbReference type="OrthoDB" id="9593at2157"/>
<dbReference type="Proteomes" id="UP000000674">
    <property type="component" value="Chromosome"/>
</dbReference>
<dbReference type="GO" id="GO:0008409">
    <property type="term" value="F:5'-3' exonuclease activity"/>
    <property type="evidence" value="ECO:0007669"/>
    <property type="project" value="UniProtKB-UniRule"/>
</dbReference>
<dbReference type="GO" id="GO:0017108">
    <property type="term" value="F:5'-flap endonuclease activity"/>
    <property type="evidence" value="ECO:0007669"/>
    <property type="project" value="UniProtKB-UniRule"/>
</dbReference>
<dbReference type="GO" id="GO:0003677">
    <property type="term" value="F:DNA binding"/>
    <property type="evidence" value="ECO:0007669"/>
    <property type="project" value="UniProtKB-UniRule"/>
</dbReference>
<dbReference type="GO" id="GO:0000287">
    <property type="term" value="F:magnesium ion binding"/>
    <property type="evidence" value="ECO:0007669"/>
    <property type="project" value="UniProtKB-UniRule"/>
</dbReference>
<dbReference type="GO" id="GO:0006281">
    <property type="term" value="P:DNA repair"/>
    <property type="evidence" value="ECO:0007669"/>
    <property type="project" value="UniProtKB-UniRule"/>
</dbReference>
<dbReference type="GO" id="GO:0043137">
    <property type="term" value="P:DNA replication, removal of RNA primer"/>
    <property type="evidence" value="ECO:0007669"/>
    <property type="project" value="UniProtKB-UniRule"/>
</dbReference>
<dbReference type="CDD" id="cd09903">
    <property type="entry name" value="H3TH_FEN1-Arc"/>
    <property type="match status" value="1"/>
</dbReference>
<dbReference type="CDD" id="cd09867">
    <property type="entry name" value="PIN_FEN1"/>
    <property type="match status" value="1"/>
</dbReference>
<dbReference type="FunFam" id="3.40.50.1010:FF:000016">
    <property type="entry name" value="Flap endonuclease 1"/>
    <property type="match status" value="1"/>
</dbReference>
<dbReference type="Gene3D" id="1.10.150.20">
    <property type="entry name" value="5' to 3' exonuclease, C-terminal subdomain"/>
    <property type="match status" value="1"/>
</dbReference>
<dbReference type="Gene3D" id="3.40.50.1010">
    <property type="entry name" value="5'-nuclease"/>
    <property type="match status" value="1"/>
</dbReference>
<dbReference type="HAMAP" id="MF_00614">
    <property type="entry name" value="Fen"/>
    <property type="match status" value="1"/>
</dbReference>
<dbReference type="InterPro" id="IPR036279">
    <property type="entry name" value="5-3_exonuclease_C_sf"/>
</dbReference>
<dbReference type="InterPro" id="IPR023426">
    <property type="entry name" value="Flap_endonuc"/>
</dbReference>
<dbReference type="InterPro" id="IPR019973">
    <property type="entry name" value="Flap_endonuc_arc"/>
</dbReference>
<dbReference type="InterPro" id="IPR008918">
    <property type="entry name" value="HhH2"/>
</dbReference>
<dbReference type="InterPro" id="IPR029060">
    <property type="entry name" value="PIN-like_dom_sf"/>
</dbReference>
<dbReference type="InterPro" id="IPR006086">
    <property type="entry name" value="XPG-I_dom"/>
</dbReference>
<dbReference type="InterPro" id="IPR006084">
    <property type="entry name" value="XPG/Rad2"/>
</dbReference>
<dbReference type="InterPro" id="IPR019974">
    <property type="entry name" value="XPG_CS"/>
</dbReference>
<dbReference type="InterPro" id="IPR006085">
    <property type="entry name" value="XPG_DNA_repair_N"/>
</dbReference>
<dbReference type="NCBIfam" id="TIGR03674">
    <property type="entry name" value="fen_arch"/>
    <property type="match status" value="1"/>
</dbReference>
<dbReference type="PANTHER" id="PTHR11081:SF9">
    <property type="entry name" value="FLAP ENDONUCLEASE 1"/>
    <property type="match status" value="1"/>
</dbReference>
<dbReference type="PANTHER" id="PTHR11081">
    <property type="entry name" value="FLAP ENDONUCLEASE FAMILY MEMBER"/>
    <property type="match status" value="1"/>
</dbReference>
<dbReference type="Pfam" id="PF00867">
    <property type="entry name" value="XPG_I"/>
    <property type="match status" value="1"/>
</dbReference>
<dbReference type="Pfam" id="PF00752">
    <property type="entry name" value="XPG_N"/>
    <property type="match status" value="1"/>
</dbReference>
<dbReference type="PRINTS" id="PR00853">
    <property type="entry name" value="XPGRADSUPER"/>
</dbReference>
<dbReference type="SMART" id="SM00279">
    <property type="entry name" value="HhH2"/>
    <property type="match status" value="1"/>
</dbReference>
<dbReference type="SMART" id="SM00484">
    <property type="entry name" value="XPGI"/>
    <property type="match status" value="1"/>
</dbReference>
<dbReference type="SMART" id="SM00485">
    <property type="entry name" value="XPGN"/>
    <property type="match status" value="1"/>
</dbReference>
<dbReference type="SUPFAM" id="SSF47807">
    <property type="entry name" value="5' to 3' exonuclease, C-terminal subdomain"/>
    <property type="match status" value="1"/>
</dbReference>
<dbReference type="SUPFAM" id="SSF88723">
    <property type="entry name" value="PIN domain-like"/>
    <property type="match status" value="1"/>
</dbReference>
<dbReference type="PROSITE" id="PS00841">
    <property type="entry name" value="XPG_1"/>
    <property type="match status" value="1"/>
</dbReference>
<sequence>MGVDLGDILSKKKISLENLSGCWIAVDGFNTLYQFLSIIRQPDGTPLMDASGRVTSHLSGLLYRMTNLIEVGIRVAFVFDGTPPELKAGTLAARAQMKEAAEIQLQEAIATGVDSFRYAQATARINSEILHDSIRLLDAMGIPYVQAPSEGEAQAAFMAIRGDVDYVASQDYDSLLFGAPRVVRNLAITGRRKMPRKNIYIDVPPEVIILEEELTRLGISREQLIDIGIMCGTDYNRGLPKVGPKRALKLIREHGCLEAVLDALGESIENFREIRELFLHPAVTESYELRMRKPMVDEIVGFLCNERNFSEDRVRKAAERLNASYRSGQSTLERWL</sequence>
<protein>
    <recommendedName>
        <fullName evidence="2">Flap endonuclease 1</fullName>
        <shortName evidence="2">FEN-1</shortName>
        <ecNumber evidence="2">3.1.-.-</ecNumber>
    </recommendedName>
    <alternativeName>
        <fullName evidence="2">Flap structure-specific endonuclease 1</fullName>
    </alternativeName>
</protein>
<comment type="function">
    <text evidence="1">Structure-specific nuclease with 5'-flap endonuclease and 5'-3' exonuclease activities involved in DNA replication and repair. During DNA replication, cleaves the 5'-overhanging flap structure that is generated by displacement synthesis when DNA polymerase encounters the 5'-end of a downstream Okazaki fragment. Binds the unpaired 3'-DNA end and kinks the DNA to facilitate 5' cleavage specificity. Cleaves one nucleotide into the double-stranded DNA from the junction in flap DNA, leaving a nick for ligation. Also involved in the base excision repair (BER) pathway. Acts as a genome stabilization factor that prevents flaps from equilibrating into structures that lead to duplications and deletions. Also possesses 5'-3' exonuclease activity on nicked or gapped double-stranded DNA (By similarity).</text>
</comment>
<comment type="cofactor">
    <cofactor evidence="2">
        <name>Mg(2+)</name>
        <dbReference type="ChEBI" id="CHEBI:18420"/>
    </cofactor>
    <text evidence="2">Binds 2 magnesium ions per subunit. They probably participate in the reaction catalyzed by the enzyme. May bind an additional third magnesium ion after substrate binding.</text>
</comment>
<comment type="subunit">
    <text evidence="2">Interacts with PCNA. PCNA stimulates the nuclease activity without altering cleavage specificity.</text>
</comment>
<comment type="similarity">
    <text evidence="2">Belongs to the XPG/RAD2 endonuclease family. FEN1 subfamily.</text>
</comment>